<feature type="chain" id="PRO_0000050539" description="Cathepsin L2">
    <location>
        <begin position="1"/>
        <end position="14" status="greater than"/>
    </location>
</feature>
<feature type="non-terminal residue">
    <location>
        <position position="14"/>
    </location>
</feature>
<evidence type="ECO:0000255" key="1">
    <source>
        <dbReference type="PROSITE-ProRule" id="PRU10088"/>
    </source>
</evidence>
<evidence type="ECO:0000255" key="2">
    <source>
        <dbReference type="PROSITE-ProRule" id="PRU10089"/>
    </source>
</evidence>
<evidence type="ECO:0000255" key="3">
    <source>
        <dbReference type="PROSITE-ProRule" id="PRU10090"/>
    </source>
</evidence>
<organism>
    <name type="scientific">Fasciola hepatica</name>
    <name type="common">Liver fluke</name>
    <dbReference type="NCBI Taxonomy" id="6192"/>
    <lineage>
        <taxon>Eukaryota</taxon>
        <taxon>Metazoa</taxon>
        <taxon>Spiralia</taxon>
        <taxon>Lophotrochozoa</taxon>
        <taxon>Platyhelminthes</taxon>
        <taxon>Trematoda</taxon>
        <taxon>Digenea</taxon>
        <taxon>Plagiorchiida</taxon>
        <taxon>Echinostomata</taxon>
        <taxon>Echinostomatoidea</taxon>
        <taxon>Fasciolidae</taxon>
        <taxon>Fasciola</taxon>
    </lineage>
</organism>
<accession>P80342</accession>
<name>CATL2_FASHE</name>
<comment type="function">
    <text>Thiol protease that assists the parasite in burrowing through the gut wall and liver of its mammalian host.</text>
</comment>
<comment type="catalytic activity">
    <reaction>
        <text>Specificity close to that of papain. As compared to cathepsin B, cathepsin L exhibits higher activity toward protein substrates, but has little activity on Z-Arg-Arg-NHMec, and no peptidyl-dipeptidase activity.</text>
        <dbReference type="EC" id="3.4.22.15"/>
    </reaction>
</comment>
<comment type="subunit">
    <text>Dimer of a heavy and a light chain linked by disulfide bonds.</text>
</comment>
<comment type="subcellular location">
    <subcellularLocation>
        <location>Lysosome</location>
    </subcellularLocation>
</comment>
<comment type="similarity">
    <text evidence="1 2 3">Belongs to the peptidase C1 family.</text>
</comment>
<sequence>AVPDKIDRRESGYV</sequence>
<dbReference type="EC" id="3.4.22.15"/>
<dbReference type="PIR" id="S45655">
    <property type="entry name" value="S45655"/>
</dbReference>
<dbReference type="DrugBank" id="DB12245">
    <property type="generic name" value="Triclabendazole"/>
</dbReference>
<dbReference type="MEROPS" id="C01.093"/>
<dbReference type="BRENDA" id="3.4.22.B60">
    <property type="organism ID" value="2230"/>
</dbReference>
<dbReference type="GO" id="GO:0005764">
    <property type="term" value="C:lysosome"/>
    <property type="evidence" value="ECO:0007669"/>
    <property type="project" value="UniProtKB-SubCell"/>
</dbReference>
<dbReference type="GO" id="GO:0004197">
    <property type="term" value="F:cysteine-type endopeptidase activity"/>
    <property type="evidence" value="ECO:0007669"/>
    <property type="project" value="UniProtKB-EC"/>
</dbReference>
<dbReference type="GO" id="GO:0006508">
    <property type="term" value="P:proteolysis"/>
    <property type="evidence" value="ECO:0007669"/>
    <property type="project" value="UniProtKB-KW"/>
</dbReference>
<proteinExistence type="evidence at protein level"/>
<reference key="1">
    <citation type="journal article" date="1994" name="Eur. J. Biochem.">
        <title>Purification and characterisation of a second cathepsin L proteinase secreted by the parasitic trematode Fasciola hepatica.</title>
        <authorList>
            <person name="Dowd A.J."/>
            <person name="Smith A.M."/>
            <person name="McGonicle S."/>
            <person name="Dalton J.P."/>
        </authorList>
    </citation>
    <scope>PROTEIN SEQUENCE</scope>
</reference>
<protein>
    <recommendedName>
        <fullName>Cathepsin L2</fullName>
        <ecNumber>3.4.22.15</ecNumber>
    </recommendedName>
</protein>
<keyword id="KW-0903">Direct protein sequencing</keyword>
<keyword id="KW-1015">Disulfide bond</keyword>
<keyword id="KW-0378">Hydrolase</keyword>
<keyword id="KW-0458">Lysosome</keyword>
<keyword id="KW-0645">Protease</keyword>
<keyword id="KW-0788">Thiol protease</keyword>